<evidence type="ECO:0000255" key="1">
    <source>
        <dbReference type="HAMAP-Rule" id="MF_00115"/>
    </source>
</evidence>
<name>MSCL_LIGS1</name>
<accession>Q1WVR1</accession>
<dbReference type="EMBL" id="CP000233">
    <property type="protein sequence ID" value="ABD98836.1"/>
    <property type="molecule type" value="Genomic_DNA"/>
</dbReference>
<dbReference type="RefSeq" id="WP_003701438.1">
    <property type="nucleotide sequence ID" value="NC_007929.1"/>
</dbReference>
<dbReference type="RefSeq" id="YP_534919.1">
    <property type="nucleotide sequence ID" value="NC_007929.1"/>
</dbReference>
<dbReference type="SMR" id="Q1WVR1"/>
<dbReference type="STRING" id="362948.LSL_0013"/>
<dbReference type="KEGG" id="lsl:LSL_0013"/>
<dbReference type="PATRIC" id="fig|362948.14.peg.87"/>
<dbReference type="HOGENOM" id="CLU_095787_0_0_9"/>
<dbReference type="OrthoDB" id="9810350at2"/>
<dbReference type="Proteomes" id="UP000006559">
    <property type="component" value="Chromosome"/>
</dbReference>
<dbReference type="GO" id="GO:0005886">
    <property type="term" value="C:plasma membrane"/>
    <property type="evidence" value="ECO:0007669"/>
    <property type="project" value="UniProtKB-SubCell"/>
</dbReference>
<dbReference type="GO" id="GO:0008381">
    <property type="term" value="F:mechanosensitive monoatomic ion channel activity"/>
    <property type="evidence" value="ECO:0007669"/>
    <property type="project" value="UniProtKB-UniRule"/>
</dbReference>
<dbReference type="Gene3D" id="1.10.1200.120">
    <property type="entry name" value="Large-conductance mechanosensitive channel, MscL, domain 1"/>
    <property type="match status" value="1"/>
</dbReference>
<dbReference type="HAMAP" id="MF_00115">
    <property type="entry name" value="MscL"/>
    <property type="match status" value="1"/>
</dbReference>
<dbReference type="InterPro" id="IPR019823">
    <property type="entry name" value="Mechanosensitive_channel_CS"/>
</dbReference>
<dbReference type="InterPro" id="IPR001185">
    <property type="entry name" value="MS_channel"/>
</dbReference>
<dbReference type="InterPro" id="IPR037673">
    <property type="entry name" value="MSC/AndL"/>
</dbReference>
<dbReference type="InterPro" id="IPR036019">
    <property type="entry name" value="MscL_channel"/>
</dbReference>
<dbReference type="NCBIfam" id="TIGR00220">
    <property type="entry name" value="mscL"/>
    <property type="match status" value="1"/>
</dbReference>
<dbReference type="NCBIfam" id="NF001842">
    <property type="entry name" value="PRK00567.1-3"/>
    <property type="match status" value="1"/>
</dbReference>
<dbReference type="PANTHER" id="PTHR30266:SF2">
    <property type="entry name" value="LARGE-CONDUCTANCE MECHANOSENSITIVE CHANNEL"/>
    <property type="match status" value="1"/>
</dbReference>
<dbReference type="PANTHER" id="PTHR30266">
    <property type="entry name" value="MECHANOSENSITIVE CHANNEL MSCL"/>
    <property type="match status" value="1"/>
</dbReference>
<dbReference type="Pfam" id="PF01741">
    <property type="entry name" value="MscL"/>
    <property type="match status" value="1"/>
</dbReference>
<dbReference type="PRINTS" id="PR01264">
    <property type="entry name" value="MECHCHANNEL"/>
</dbReference>
<dbReference type="SUPFAM" id="SSF81330">
    <property type="entry name" value="Gated mechanosensitive channel"/>
    <property type="match status" value="1"/>
</dbReference>
<dbReference type="PROSITE" id="PS01327">
    <property type="entry name" value="MSCL"/>
    <property type="match status" value="1"/>
</dbReference>
<proteinExistence type="inferred from homology"/>
<sequence>MLKEFKEFISRGNVMDLAVGVIIGGAFTAIVNSLVKYIINPFLGLFVGAIDFSDLVFKIGNATFRVGSFLNAVINFLIIAFVVFLMVKGINKVLRQDKKEEAPAPKDPQLEVLEEIRDSLKKLDK</sequence>
<protein>
    <recommendedName>
        <fullName evidence="1">Large-conductance mechanosensitive channel</fullName>
    </recommendedName>
</protein>
<organism>
    <name type="scientific">Ligilactobacillus salivarius (strain UCC118)</name>
    <name type="common">Lactobacillus salivarius</name>
    <dbReference type="NCBI Taxonomy" id="362948"/>
    <lineage>
        <taxon>Bacteria</taxon>
        <taxon>Bacillati</taxon>
        <taxon>Bacillota</taxon>
        <taxon>Bacilli</taxon>
        <taxon>Lactobacillales</taxon>
        <taxon>Lactobacillaceae</taxon>
        <taxon>Ligilactobacillus</taxon>
    </lineage>
</organism>
<keyword id="KW-1003">Cell membrane</keyword>
<keyword id="KW-0407">Ion channel</keyword>
<keyword id="KW-0406">Ion transport</keyword>
<keyword id="KW-0472">Membrane</keyword>
<keyword id="KW-1185">Reference proteome</keyword>
<keyword id="KW-0812">Transmembrane</keyword>
<keyword id="KW-1133">Transmembrane helix</keyword>
<keyword id="KW-0813">Transport</keyword>
<feature type="chain" id="PRO_1000015393" description="Large-conductance mechanosensitive channel">
    <location>
        <begin position="1"/>
        <end position="125"/>
    </location>
</feature>
<feature type="transmembrane region" description="Helical" evidence="1">
    <location>
        <begin position="19"/>
        <end position="39"/>
    </location>
</feature>
<feature type="transmembrane region" description="Helical" evidence="1">
    <location>
        <begin position="42"/>
        <end position="62"/>
    </location>
</feature>
<feature type="transmembrane region" description="Helical" evidence="1">
    <location>
        <begin position="66"/>
        <end position="86"/>
    </location>
</feature>
<comment type="function">
    <text evidence="1">Channel that opens in response to stretch forces in the membrane lipid bilayer. May participate in the regulation of osmotic pressure changes within the cell.</text>
</comment>
<comment type="subunit">
    <text evidence="1">Homopentamer.</text>
</comment>
<comment type="subcellular location">
    <subcellularLocation>
        <location evidence="1">Cell membrane</location>
        <topology evidence="1">Multi-pass membrane protein</topology>
    </subcellularLocation>
</comment>
<comment type="similarity">
    <text evidence="1">Belongs to the MscL family.</text>
</comment>
<reference key="1">
    <citation type="journal article" date="2006" name="Proc. Natl. Acad. Sci. U.S.A.">
        <title>Multireplicon genome architecture of Lactobacillus salivarius.</title>
        <authorList>
            <person name="Claesson M.J."/>
            <person name="Li Y."/>
            <person name="Leahy S."/>
            <person name="Canchaya C."/>
            <person name="van Pijkeren J.P."/>
            <person name="Cerdeno-Tarraga A.M."/>
            <person name="Parkhill J."/>
            <person name="Flynn S."/>
            <person name="O'Sullivan G.C."/>
            <person name="Collins J.K."/>
            <person name="Higgins D."/>
            <person name="Shanahan F."/>
            <person name="Fitzgerald G.F."/>
            <person name="van Sinderen D."/>
            <person name="O'Toole P.W."/>
        </authorList>
    </citation>
    <scope>NUCLEOTIDE SEQUENCE [LARGE SCALE GENOMIC DNA]</scope>
    <source>
        <strain>UCC118</strain>
    </source>
</reference>
<gene>
    <name evidence="1" type="primary">mscL</name>
    <name type="ordered locus">LSL_0013</name>
</gene>